<accession>Q88ND4</accession>
<evidence type="ECO:0000250" key="1"/>
<evidence type="ECO:0000255" key="2"/>
<evidence type="ECO:0000305" key="3"/>
<gene>
    <name type="primary">algF</name>
    <name type="ordered locus">PP_1278</name>
</gene>
<dbReference type="EMBL" id="AE015451">
    <property type="protein sequence ID" value="AAN66902.1"/>
    <property type="molecule type" value="Genomic_DNA"/>
</dbReference>
<dbReference type="RefSeq" id="NP_743438.1">
    <property type="nucleotide sequence ID" value="NC_002947.4"/>
</dbReference>
<dbReference type="RefSeq" id="WP_003251744.1">
    <property type="nucleotide sequence ID" value="NZ_CP169744.1"/>
</dbReference>
<dbReference type="SMR" id="Q88ND4"/>
<dbReference type="STRING" id="160488.PP_1278"/>
<dbReference type="PaxDb" id="160488-PP_1278"/>
<dbReference type="KEGG" id="ppu:PP_1278"/>
<dbReference type="PATRIC" id="fig|160488.4.peg.1355"/>
<dbReference type="eggNOG" id="ENOG5032T05">
    <property type="taxonomic scope" value="Bacteria"/>
</dbReference>
<dbReference type="HOGENOM" id="CLU_112428_0_0_6"/>
<dbReference type="OrthoDB" id="7000405at2"/>
<dbReference type="PhylomeDB" id="Q88ND4"/>
<dbReference type="BioCyc" id="PPUT160488:G1G01-1365-MONOMER"/>
<dbReference type="UniPathway" id="UPA00286"/>
<dbReference type="Proteomes" id="UP000000556">
    <property type="component" value="Chromosome"/>
</dbReference>
<dbReference type="GO" id="GO:0042597">
    <property type="term" value="C:periplasmic space"/>
    <property type="evidence" value="ECO:0007669"/>
    <property type="project" value="UniProtKB-SubCell"/>
</dbReference>
<dbReference type="GO" id="GO:0042121">
    <property type="term" value="P:alginic acid biosynthetic process"/>
    <property type="evidence" value="ECO:0007669"/>
    <property type="project" value="UniProtKB-UniPathway"/>
</dbReference>
<dbReference type="InterPro" id="IPR035422">
    <property type="entry name" value="AlgF"/>
</dbReference>
<dbReference type="Pfam" id="PF11182">
    <property type="entry name" value="AlgF"/>
    <property type="match status" value="1"/>
</dbReference>
<proteinExistence type="inferred from homology"/>
<name>ALGF_PSEPK</name>
<feature type="signal peptide" evidence="2">
    <location>
        <begin position="1"/>
        <end position="26"/>
    </location>
</feature>
<feature type="chain" id="PRO_0000001117" description="Alginate biosynthesis protein AlgF">
    <location>
        <begin position="27"/>
        <end position="215"/>
    </location>
</feature>
<organism>
    <name type="scientific">Pseudomonas putida (strain ATCC 47054 / DSM 6125 / CFBP 8728 / NCIMB 11950 / KT2440)</name>
    <dbReference type="NCBI Taxonomy" id="160488"/>
    <lineage>
        <taxon>Bacteria</taxon>
        <taxon>Pseudomonadati</taxon>
        <taxon>Pseudomonadota</taxon>
        <taxon>Gammaproteobacteria</taxon>
        <taxon>Pseudomonadales</taxon>
        <taxon>Pseudomonadaceae</taxon>
        <taxon>Pseudomonas</taxon>
    </lineage>
</organism>
<comment type="function">
    <text evidence="1">Together with AlgI and AlgJ, forms an inner membrane complex which probably interacts with the alginate polymerization-transport complex and adds acetyl groups at the O-2 and O-3 positions of mannuronate residues. Acetylation of alginate is important for the architecture of biofilms and increases the ability of alginate to act as a defense barrier (By similarity).</text>
</comment>
<comment type="pathway">
    <text>Glycan biosynthesis; alginate biosynthesis.</text>
</comment>
<comment type="subcellular location">
    <subcellularLocation>
        <location evidence="1">Periplasm</location>
    </subcellularLocation>
</comment>
<comment type="similarity">
    <text evidence="3">Belongs to the AlgF family.</text>
</comment>
<reference key="1">
    <citation type="journal article" date="2002" name="Environ. Microbiol.">
        <title>Complete genome sequence and comparative analysis of the metabolically versatile Pseudomonas putida KT2440.</title>
        <authorList>
            <person name="Nelson K.E."/>
            <person name="Weinel C."/>
            <person name="Paulsen I.T."/>
            <person name="Dodson R.J."/>
            <person name="Hilbert H."/>
            <person name="Martins dos Santos V.A.P."/>
            <person name="Fouts D.E."/>
            <person name="Gill S.R."/>
            <person name="Pop M."/>
            <person name="Holmes M."/>
            <person name="Brinkac L.M."/>
            <person name="Beanan M.J."/>
            <person name="DeBoy R.T."/>
            <person name="Daugherty S.C."/>
            <person name="Kolonay J.F."/>
            <person name="Madupu R."/>
            <person name="Nelson W.C."/>
            <person name="White O."/>
            <person name="Peterson J.D."/>
            <person name="Khouri H.M."/>
            <person name="Hance I."/>
            <person name="Chris Lee P."/>
            <person name="Holtzapple E.K."/>
            <person name="Scanlan D."/>
            <person name="Tran K."/>
            <person name="Moazzez A."/>
            <person name="Utterback T.R."/>
            <person name="Rizzo M."/>
            <person name="Lee K."/>
            <person name="Kosack D."/>
            <person name="Moestl D."/>
            <person name="Wedler H."/>
            <person name="Lauber J."/>
            <person name="Stjepandic D."/>
            <person name="Hoheisel J."/>
            <person name="Straetz M."/>
            <person name="Heim S."/>
            <person name="Kiewitz C."/>
            <person name="Eisen J.A."/>
            <person name="Timmis K.N."/>
            <person name="Duesterhoeft A."/>
            <person name="Tuemmler B."/>
            <person name="Fraser C.M."/>
        </authorList>
    </citation>
    <scope>NUCLEOTIDE SEQUENCE [LARGE SCALE GENOMIC DNA]</scope>
    <source>
        <strain>ATCC 47054 / DSM 6125 / CFBP 8728 / NCIMB 11950 / KT2440</strain>
    </source>
</reference>
<sequence>MTTKTSIAKALTLAAGLSLASMQAFAGADAALYGPSAPKGSTFVRLYNATSAPAAASVGNTQIKQVGAQASSDFSFLPGGDYTAQVGGKSVPVKLASDKYYTLVNSNSGSPKLIEEPPFKNKQKALVRVQNLSDQQLTLKTADGKTEVVKPVAANGRGEREINPVKVNLALYQGDKKVGDVKPVALERGEAAVLYVTGSGNALSPVWVTRPVASN</sequence>
<keyword id="KW-0016">Alginate biosynthesis</keyword>
<keyword id="KW-0574">Periplasm</keyword>
<keyword id="KW-1185">Reference proteome</keyword>
<keyword id="KW-0732">Signal</keyword>
<protein>
    <recommendedName>
        <fullName>Alginate biosynthesis protein AlgF</fullName>
    </recommendedName>
</protein>